<accession>B0BPJ8</accession>
<organism>
    <name type="scientific">Actinobacillus pleuropneumoniae serotype 3 (strain JL03)</name>
    <dbReference type="NCBI Taxonomy" id="434271"/>
    <lineage>
        <taxon>Bacteria</taxon>
        <taxon>Pseudomonadati</taxon>
        <taxon>Pseudomonadota</taxon>
        <taxon>Gammaproteobacteria</taxon>
        <taxon>Pasteurellales</taxon>
        <taxon>Pasteurellaceae</taxon>
        <taxon>Actinobacillus</taxon>
    </lineage>
</organism>
<keyword id="KW-0030">Aminoacyl-tRNA synthetase</keyword>
<keyword id="KW-0067">ATP-binding</keyword>
<keyword id="KW-0963">Cytoplasm</keyword>
<keyword id="KW-0436">Ligase</keyword>
<keyword id="KW-0479">Metal-binding</keyword>
<keyword id="KW-0547">Nucleotide-binding</keyword>
<keyword id="KW-0648">Protein biosynthesis</keyword>
<keyword id="KW-0862">Zinc</keyword>
<evidence type="ECO:0000255" key="1">
    <source>
        <dbReference type="HAMAP-Rule" id="MF_00041"/>
    </source>
</evidence>
<dbReference type="EC" id="6.1.1.16" evidence="1"/>
<dbReference type="EMBL" id="CP000687">
    <property type="protein sequence ID" value="ABY69483.1"/>
    <property type="molecule type" value="Genomic_DNA"/>
</dbReference>
<dbReference type="RefSeq" id="WP_005615219.1">
    <property type="nucleotide sequence ID" value="NC_010278.1"/>
</dbReference>
<dbReference type="SMR" id="B0BPJ8"/>
<dbReference type="KEGG" id="apj:APJL_0925"/>
<dbReference type="HOGENOM" id="CLU_013528_0_1_6"/>
<dbReference type="Proteomes" id="UP000008547">
    <property type="component" value="Chromosome"/>
</dbReference>
<dbReference type="GO" id="GO:0005829">
    <property type="term" value="C:cytosol"/>
    <property type="evidence" value="ECO:0007669"/>
    <property type="project" value="TreeGrafter"/>
</dbReference>
<dbReference type="GO" id="GO:0005524">
    <property type="term" value="F:ATP binding"/>
    <property type="evidence" value="ECO:0007669"/>
    <property type="project" value="UniProtKB-UniRule"/>
</dbReference>
<dbReference type="GO" id="GO:0004817">
    <property type="term" value="F:cysteine-tRNA ligase activity"/>
    <property type="evidence" value="ECO:0007669"/>
    <property type="project" value="UniProtKB-UniRule"/>
</dbReference>
<dbReference type="GO" id="GO:0008270">
    <property type="term" value="F:zinc ion binding"/>
    <property type="evidence" value="ECO:0007669"/>
    <property type="project" value="UniProtKB-UniRule"/>
</dbReference>
<dbReference type="GO" id="GO:0006423">
    <property type="term" value="P:cysteinyl-tRNA aminoacylation"/>
    <property type="evidence" value="ECO:0007669"/>
    <property type="project" value="UniProtKB-UniRule"/>
</dbReference>
<dbReference type="CDD" id="cd07963">
    <property type="entry name" value="Anticodon_Ia_Cys"/>
    <property type="match status" value="1"/>
</dbReference>
<dbReference type="CDD" id="cd00672">
    <property type="entry name" value="CysRS_core"/>
    <property type="match status" value="1"/>
</dbReference>
<dbReference type="FunFam" id="3.40.50.620:FF:000009">
    <property type="entry name" value="Cysteine--tRNA ligase"/>
    <property type="match status" value="1"/>
</dbReference>
<dbReference type="Gene3D" id="1.20.120.1910">
    <property type="entry name" value="Cysteine-tRNA ligase, C-terminal anti-codon recognition domain"/>
    <property type="match status" value="1"/>
</dbReference>
<dbReference type="Gene3D" id="3.40.50.620">
    <property type="entry name" value="HUPs"/>
    <property type="match status" value="1"/>
</dbReference>
<dbReference type="HAMAP" id="MF_00041">
    <property type="entry name" value="Cys_tRNA_synth"/>
    <property type="match status" value="1"/>
</dbReference>
<dbReference type="InterPro" id="IPR015803">
    <property type="entry name" value="Cys-tRNA-ligase"/>
</dbReference>
<dbReference type="InterPro" id="IPR015273">
    <property type="entry name" value="Cys-tRNA-synt_Ia_DALR"/>
</dbReference>
<dbReference type="InterPro" id="IPR024909">
    <property type="entry name" value="Cys-tRNA/MSH_ligase"/>
</dbReference>
<dbReference type="InterPro" id="IPR056411">
    <property type="entry name" value="CysS_C"/>
</dbReference>
<dbReference type="InterPro" id="IPR014729">
    <property type="entry name" value="Rossmann-like_a/b/a_fold"/>
</dbReference>
<dbReference type="InterPro" id="IPR032678">
    <property type="entry name" value="tRNA-synt_1_cat_dom"/>
</dbReference>
<dbReference type="InterPro" id="IPR009080">
    <property type="entry name" value="tRNAsynth_Ia_anticodon-bd"/>
</dbReference>
<dbReference type="NCBIfam" id="TIGR00435">
    <property type="entry name" value="cysS"/>
    <property type="match status" value="1"/>
</dbReference>
<dbReference type="PANTHER" id="PTHR10890:SF3">
    <property type="entry name" value="CYSTEINE--TRNA LIGASE, CYTOPLASMIC"/>
    <property type="match status" value="1"/>
</dbReference>
<dbReference type="PANTHER" id="PTHR10890">
    <property type="entry name" value="CYSTEINYL-TRNA SYNTHETASE"/>
    <property type="match status" value="1"/>
</dbReference>
<dbReference type="Pfam" id="PF23493">
    <property type="entry name" value="CysS_C"/>
    <property type="match status" value="1"/>
</dbReference>
<dbReference type="Pfam" id="PF09190">
    <property type="entry name" value="DALR_2"/>
    <property type="match status" value="1"/>
</dbReference>
<dbReference type="Pfam" id="PF01406">
    <property type="entry name" value="tRNA-synt_1e"/>
    <property type="match status" value="1"/>
</dbReference>
<dbReference type="PRINTS" id="PR00983">
    <property type="entry name" value="TRNASYNTHCYS"/>
</dbReference>
<dbReference type="SMART" id="SM00840">
    <property type="entry name" value="DALR_2"/>
    <property type="match status" value="1"/>
</dbReference>
<dbReference type="SUPFAM" id="SSF47323">
    <property type="entry name" value="Anticodon-binding domain of a subclass of class I aminoacyl-tRNA synthetases"/>
    <property type="match status" value="1"/>
</dbReference>
<dbReference type="SUPFAM" id="SSF52374">
    <property type="entry name" value="Nucleotidylyl transferase"/>
    <property type="match status" value="1"/>
</dbReference>
<reference key="1">
    <citation type="journal article" date="2008" name="PLoS ONE">
        <title>Genome biology of Actinobacillus pleuropneumoniae JL03, an isolate of serotype 3 prevalent in China.</title>
        <authorList>
            <person name="Xu Z."/>
            <person name="Zhou Y."/>
            <person name="Li L."/>
            <person name="Zhou R."/>
            <person name="Xiao S."/>
            <person name="Wan Y."/>
            <person name="Zhang S."/>
            <person name="Wang K."/>
            <person name="Li W."/>
            <person name="Li L."/>
            <person name="Jin H."/>
            <person name="Kang M."/>
            <person name="Dalai B."/>
            <person name="Li T."/>
            <person name="Liu L."/>
            <person name="Cheng Y."/>
            <person name="Zhang L."/>
            <person name="Xu T."/>
            <person name="Zheng H."/>
            <person name="Pu S."/>
            <person name="Wang B."/>
            <person name="Gu W."/>
            <person name="Zhang X.L."/>
            <person name="Zhu G.-F."/>
            <person name="Wang S."/>
            <person name="Zhao G.-P."/>
            <person name="Chen H."/>
        </authorList>
    </citation>
    <scope>NUCLEOTIDE SEQUENCE [LARGE SCALE GENOMIC DNA]</scope>
    <source>
        <strain>JL03</strain>
    </source>
</reference>
<name>SYC_ACTPJ</name>
<feature type="chain" id="PRO_1000090813" description="Cysteine--tRNA ligase">
    <location>
        <begin position="1"/>
        <end position="459"/>
    </location>
</feature>
<feature type="short sequence motif" description="'HIGH' region">
    <location>
        <begin position="30"/>
        <end position="40"/>
    </location>
</feature>
<feature type="short sequence motif" description="'KMSKS' region">
    <location>
        <begin position="266"/>
        <end position="270"/>
    </location>
</feature>
<feature type="binding site" evidence="1">
    <location>
        <position position="28"/>
    </location>
    <ligand>
        <name>Zn(2+)</name>
        <dbReference type="ChEBI" id="CHEBI:29105"/>
    </ligand>
</feature>
<feature type="binding site" evidence="1">
    <location>
        <position position="209"/>
    </location>
    <ligand>
        <name>Zn(2+)</name>
        <dbReference type="ChEBI" id="CHEBI:29105"/>
    </ligand>
</feature>
<feature type="binding site" evidence="1">
    <location>
        <position position="234"/>
    </location>
    <ligand>
        <name>Zn(2+)</name>
        <dbReference type="ChEBI" id="CHEBI:29105"/>
    </ligand>
</feature>
<feature type="binding site" evidence="1">
    <location>
        <position position="238"/>
    </location>
    <ligand>
        <name>Zn(2+)</name>
        <dbReference type="ChEBI" id="CHEBI:29105"/>
    </ligand>
</feature>
<feature type="binding site" evidence="1">
    <location>
        <position position="269"/>
    </location>
    <ligand>
        <name>ATP</name>
        <dbReference type="ChEBI" id="CHEBI:30616"/>
    </ligand>
</feature>
<sequence length="459" mass="52162">MLKIYNTLKREKEEFKPINPNQVGMYVCGVTVYDLCHFGHGRTFVSFDVIARYLRYLGYNLRYVRNITDVDDKIIKRALENNETCDQLVDRMIAEMHKDFDDLNILRPDVEPRATKHIPEIVAMVEKLIANGHAYVAADGDVMFDVESFKKYGALSRQNLEQLQAGARVEIKSVKKNPMDFVLWKMSKEGEPSWQSPWGNGRPGWHIECSAMNSKELGEHFDIHGGGSDLMFPHHENEIAQSCCAHGGDYVNYWLHTGMLTIDDEKMSKSLGNFFTIRTMLEKYESETLRYFFLTAHYRSLLNYSLNNLDLARSALERLYTSLRGCDLSVEVAGGEQYVEAFKAAMDDDFNTPGALAVLFEIAREVNKLKTEDMAKANGLAVRLKELAGVLGLLYQDPEAFLQGDADNDEVAEIEALIKQRNEAKAAKNWAVADEVRDKLKAMNIVLEDTPNGTTWRKA</sequence>
<gene>
    <name evidence="1" type="primary">cysS</name>
    <name type="ordered locus">APJL_0925</name>
</gene>
<comment type="catalytic activity">
    <reaction evidence="1">
        <text>tRNA(Cys) + L-cysteine + ATP = L-cysteinyl-tRNA(Cys) + AMP + diphosphate</text>
        <dbReference type="Rhea" id="RHEA:17773"/>
        <dbReference type="Rhea" id="RHEA-COMP:9661"/>
        <dbReference type="Rhea" id="RHEA-COMP:9679"/>
        <dbReference type="ChEBI" id="CHEBI:30616"/>
        <dbReference type="ChEBI" id="CHEBI:33019"/>
        <dbReference type="ChEBI" id="CHEBI:35235"/>
        <dbReference type="ChEBI" id="CHEBI:78442"/>
        <dbReference type="ChEBI" id="CHEBI:78517"/>
        <dbReference type="ChEBI" id="CHEBI:456215"/>
        <dbReference type="EC" id="6.1.1.16"/>
    </reaction>
</comment>
<comment type="cofactor">
    <cofactor evidence="1">
        <name>Zn(2+)</name>
        <dbReference type="ChEBI" id="CHEBI:29105"/>
    </cofactor>
    <text evidence="1">Binds 1 zinc ion per subunit.</text>
</comment>
<comment type="subunit">
    <text evidence="1">Monomer.</text>
</comment>
<comment type="subcellular location">
    <subcellularLocation>
        <location evidence="1">Cytoplasm</location>
    </subcellularLocation>
</comment>
<comment type="similarity">
    <text evidence="1">Belongs to the class-I aminoacyl-tRNA synthetase family.</text>
</comment>
<proteinExistence type="inferred from homology"/>
<protein>
    <recommendedName>
        <fullName evidence="1">Cysteine--tRNA ligase</fullName>
        <ecNumber evidence="1">6.1.1.16</ecNumber>
    </recommendedName>
    <alternativeName>
        <fullName evidence="1">Cysteinyl-tRNA synthetase</fullName>
        <shortName evidence="1">CysRS</shortName>
    </alternativeName>
</protein>